<keyword id="KW-1005">Bacterial flagellum biogenesis</keyword>
<keyword id="KW-0143">Chaperone</keyword>
<keyword id="KW-0963">Cytoplasm</keyword>
<keyword id="KW-1185">Reference proteome</keyword>
<keyword id="KW-0810">Translation regulation</keyword>
<protein>
    <recommendedName>
        <fullName evidence="1">Flagellar assembly factor FliW</fullName>
    </recommendedName>
</protein>
<organism>
    <name type="scientific">Clostridium novyi (strain NT)</name>
    <dbReference type="NCBI Taxonomy" id="386415"/>
    <lineage>
        <taxon>Bacteria</taxon>
        <taxon>Bacillati</taxon>
        <taxon>Bacillota</taxon>
        <taxon>Clostridia</taxon>
        <taxon>Eubacteriales</taxon>
        <taxon>Clostridiaceae</taxon>
        <taxon>Clostridium</taxon>
    </lineage>
</organism>
<feature type="chain" id="PRO_1000065816" description="Flagellar assembly factor FliW">
    <location>
        <begin position="1"/>
        <end position="143"/>
    </location>
</feature>
<gene>
    <name evidence="1" type="primary">fliW</name>
    <name type="ordered locus">NT01CX_1874</name>
</gene>
<name>FLIW_CLONN</name>
<sequence>MKLETKCHGIIEYKEEDVIEFKKGIPGFNELKRFINFPIEDNEVFSVLHSIENNEIGFIVTSPFSIIKDYEINLDDSVIERLNIENEKDVLVLNTVTLHSKLENITVNLCAPIVINIKTKLGEQIILNNGKYQIKHPLFKEGI</sequence>
<comment type="function">
    <text evidence="1">Acts as an anti-CsrA protein, binds CsrA and prevents it from repressing translation of its target genes, one of which is flagellin. Binds to flagellin and participates in the assembly of the flagellum.</text>
</comment>
<comment type="subunit">
    <text evidence="1">Interacts with translational regulator CsrA and flagellin(s).</text>
</comment>
<comment type="subcellular location">
    <subcellularLocation>
        <location evidence="1">Cytoplasm</location>
    </subcellularLocation>
</comment>
<comment type="similarity">
    <text evidence="1">Belongs to the FliW family.</text>
</comment>
<accession>A0PZZ5</accession>
<proteinExistence type="inferred from homology"/>
<reference key="1">
    <citation type="journal article" date="2006" name="Nat. Biotechnol.">
        <title>The genome and transcriptomes of the anti-tumor agent Clostridium novyi-NT.</title>
        <authorList>
            <person name="Bettegowda C."/>
            <person name="Huang X."/>
            <person name="Lin J."/>
            <person name="Cheong I."/>
            <person name="Kohli M."/>
            <person name="Szabo S.A."/>
            <person name="Zhang X."/>
            <person name="Diaz L.A. Jr."/>
            <person name="Velculescu V.E."/>
            <person name="Parmigiani G."/>
            <person name="Kinzler K.W."/>
            <person name="Vogelstein B."/>
            <person name="Zhou S."/>
        </authorList>
    </citation>
    <scope>NUCLEOTIDE SEQUENCE [LARGE SCALE GENOMIC DNA]</scope>
    <source>
        <strain>NT</strain>
    </source>
</reference>
<dbReference type="EMBL" id="CP000382">
    <property type="protein sequence ID" value="ABK61845.1"/>
    <property type="molecule type" value="Genomic_DNA"/>
</dbReference>
<dbReference type="RefSeq" id="WP_011721951.1">
    <property type="nucleotide sequence ID" value="NC_008593.1"/>
</dbReference>
<dbReference type="SMR" id="A0PZZ5"/>
<dbReference type="STRING" id="386415.NT01CX_1874"/>
<dbReference type="KEGG" id="cno:NT01CX_1874"/>
<dbReference type="PATRIC" id="fig|386415.7.peg.976"/>
<dbReference type="eggNOG" id="COG1699">
    <property type="taxonomic scope" value="Bacteria"/>
</dbReference>
<dbReference type="HOGENOM" id="CLU_112356_0_2_9"/>
<dbReference type="Proteomes" id="UP000008220">
    <property type="component" value="Chromosome"/>
</dbReference>
<dbReference type="GO" id="GO:0005737">
    <property type="term" value="C:cytoplasm"/>
    <property type="evidence" value="ECO:0007669"/>
    <property type="project" value="UniProtKB-SubCell"/>
</dbReference>
<dbReference type="GO" id="GO:0044780">
    <property type="term" value="P:bacterial-type flagellum assembly"/>
    <property type="evidence" value="ECO:0007669"/>
    <property type="project" value="UniProtKB-UniRule"/>
</dbReference>
<dbReference type="GO" id="GO:0006417">
    <property type="term" value="P:regulation of translation"/>
    <property type="evidence" value="ECO:0007669"/>
    <property type="project" value="UniProtKB-KW"/>
</dbReference>
<dbReference type="Gene3D" id="2.30.290.10">
    <property type="entry name" value="BH3618-like"/>
    <property type="match status" value="1"/>
</dbReference>
<dbReference type="HAMAP" id="MF_01185">
    <property type="entry name" value="FliW"/>
    <property type="match status" value="1"/>
</dbReference>
<dbReference type="InterPro" id="IPR003775">
    <property type="entry name" value="Flagellar_assembly_factor_FliW"/>
</dbReference>
<dbReference type="InterPro" id="IPR024046">
    <property type="entry name" value="Flagellar_assmbl_FliW_dom_sf"/>
</dbReference>
<dbReference type="NCBIfam" id="NF009793">
    <property type="entry name" value="PRK13285.1-1"/>
    <property type="match status" value="1"/>
</dbReference>
<dbReference type="PANTHER" id="PTHR39190">
    <property type="entry name" value="FLAGELLAR ASSEMBLY FACTOR FLIW"/>
    <property type="match status" value="1"/>
</dbReference>
<dbReference type="PANTHER" id="PTHR39190:SF1">
    <property type="entry name" value="FLAGELLAR ASSEMBLY FACTOR FLIW"/>
    <property type="match status" value="1"/>
</dbReference>
<dbReference type="Pfam" id="PF02623">
    <property type="entry name" value="FliW"/>
    <property type="match status" value="1"/>
</dbReference>
<dbReference type="SUPFAM" id="SSF141457">
    <property type="entry name" value="BH3618-like"/>
    <property type="match status" value="1"/>
</dbReference>
<evidence type="ECO:0000255" key="1">
    <source>
        <dbReference type="HAMAP-Rule" id="MF_01185"/>
    </source>
</evidence>